<feature type="chain" id="PRO_1000016639" description="tRNA uridine 5-carboxymethylaminomethyl modification enzyme MnmG">
    <location>
        <begin position="1"/>
        <end position="655"/>
    </location>
</feature>
<feature type="binding site" evidence="1">
    <location>
        <begin position="17"/>
        <end position="22"/>
    </location>
    <ligand>
        <name>FAD</name>
        <dbReference type="ChEBI" id="CHEBI:57692"/>
    </ligand>
</feature>
<feature type="binding site" evidence="1">
    <location>
        <begin position="290"/>
        <end position="304"/>
    </location>
    <ligand>
        <name>NAD(+)</name>
        <dbReference type="ChEBI" id="CHEBI:57540"/>
    </ligand>
</feature>
<proteinExistence type="inferred from homology"/>
<dbReference type="EMBL" id="CP000551">
    <property type="protein sequence ID" value="ABM71167.1"/>
    <property type="molecule type" value="Genomic_DNA"/>
</dbReference>
<dbReference type="RefSeq" id="WP_011819285.1">
    <property type="nucleotide sequence ID" value="NC_008816.1"/>
</dbReference>
<dbReference type="SMR" id="A2BTQ6"/>
<dbReference type="STRING" id="146891.A9601_18841"/>
<dbReference type="KEGG" id="pmb:A9601_18841"/>
<dbReference type="eggNOG" id="COG0445">
    <property type="taxonomic scope" value="Bacteria"/>
</dbReference>
<dbReference type="HOGENOM" id="CLU_007831_2_2_3"/>
<dbReference type="OrthoDB" id="9815560at2"/>
<dbReference type="Proteomes" id="UP000002590">
    <property type="component" value="Chromosome"/>
</dbReference>
<dbReference type="GO" id="GO:0005737">
    <property type="term" value="C:cytoplasm"/>
    <property type="evidence" value="ECO:0007669"/>
    <property type="project" value="UniProtKB-SubCell"/>
</dbReference>
<dbReference type="GO" id="GO:0050660">
    <property type="term" value="F:flavin adenine dinucleotide binding"/>
    <property type="evidence" value="ECO:0007669"/>
    <property type="project" value="UniProtKB-UniRule"/>
</dbReference>
<dbReference type="GO" id="GO:0030488">
    <property type="term" value="P:tRNA methylation"/>
    <property type="evidence" value="ECO:0007669"/>
    <property type="project" value="TreeGrafter"/>
</dbReference>
<dbReference type="GO" id="GO:0002098">
    <property type="term" value="P:tRNA wobble uridine modification"/>
    <property type="evidence" value="ECO:0007669"/>
    <property type="project" value="InterPro"/>
</dbReference>
<dbReference type="FunFam" id="1.10.10.1800:FF:000001">
    <property type="entry name" value="tRNA uridine 5-carboxymethylaminomethyl modification enzyme MnmG"/>
    <property type="match status" value="1"/>
</dbReference>
<dbReference type="FunFam" id="1.10.150.570:FF:000001">
    <property type="entry name" value="tRNA uridine 5-carboxymethylaminomethyl modification enzyme MnmG"/>
    <property type="match status" value="1"/>
</dbReference>
<dbReference type="FunFam" id="3.50.50.60:FF:000094">
    <property type="entry name" value="tRNA uridine 5-carboxymethylaminomethyl modification enzyme MnmG"/>
    <property type="match status" value="1"/>
</dbReference>
<dbReference type="Gene3D" id="3.50.50.60">
    <property type="entry name" value="FAD/NAD(P)-binding domain"/>
    <property type="match status" value="2"/>
</dbReference>
<dbReference type="Gene3D" id="1.10.150.570">
    <property type="entry name" value="GidA associated domain, C-terminal subdomain"/>
    <property type="match status" value="1"/>
</dbReference>
<dbReference type="Gene3D" id="1.10.10.1800">
    <property type="entry name" value="tRNA uridine 5-carboxymethylaminomethyl modification enzyme MnmG/GidA"/>
    <property type="match status" value="1"/>
</dbReference>
<dbReference type="HAMAP" id="MF_00129">
    <property type="entry name" value="MnmG_GidA"/>
    <property type="match status" value="1"/>
</dbReference>
<dbReference type="InterPro" id="IPR036188">
    <property type="entry name" value="FAD/NAD-bd_sf"/>
</dbReference>
<dbReference type="InterPro" id="IPR049312">
    <property type="entry name" value="GIDA_C_N"/>
</dbReference>
<dbReference type="InterPro" id="IPR004416">
    <property type="entry name" value="MnmG"/>
</dbReference>
<dbReference type="InterPro" id="IPR002218">
    <property type="entry name" value="MnmG-rel"/>
</dbReference>
<dbReference type="InterPro" id="IPR020595">
    <property type="entry name" value="MnmG-rel_CS"/>
</dbReference>
<dbReference type="InterPro" id="IPR026904">
    <property type="entry name" value="MnmG_C"/>
</dbReference>
<dbReference type="InterPro" id="IPR047001">
    <property type="entry name" value="MnmG_C_subdom"/>
</dbReference>
<dbReference type="InterPro" id="IPR044920">
    <property type="entry name" value="MnmG_C_subdom_sf"/>
</dbReference>
<dbReference type="InterPro" id="IPR040131">
    <property type="entry name" value="MnmG_N"/>
</dbReference>
<dbReference type="NCBIfam" id="TIGR00136">
    <property type="entry name" value="mnmG_gidA"/>
    <property type="match status" value="1"/>
</dbReference>
<dbReference type="PANTHER" id="PTHR11806">
    <property type="entry name" value="GLUCOSE INHIBITED DIVISION PROTEIN A"/>
    <property type="match status" value="1"/>
</dbReference>
<dbReference type="PANTHER" id="PTHR11806:SF0">
    <property type="entry name" value="PROTEIN MTO1 HOMOLOG, MITOCHONDRIAL"/>
    <property type="match status" value="1"/>
</dbReference>
<dbReference type="Pfam" id="PF01134">
    <property type="entry name" value="GIDA"/>
    <property type="match status" value="1"/>
</dbReference>
<dbReference type="Pfam" id="PF21680">
    <property type="entry name" value="GIDA_C_1st"/>
    <property type="match status" value="1"/>
</dbReference>
<dbReference type="Pfam" id="PF13932">
    <property type="entry name" value="SAM_GIDA_C"/>
    <property type="match status" value="1"/>
</dbReference>
<dbReference type="SMART" id="SM01228">
    <property type="entry name" value="GIDA_assoc_3"/>
    <property type="match status" value="1"/>
</dbReference>
<dbReference type="SUPFAM" id="SSF51905">
    <property type="entry name" value="FAD/NAD(P)-binding domain"/>
    <property type="match status" value="1"/>
</dbReference>
<dbReference type="PROSITE" id="PS01280">
    <property type="entry name" value="GIDA_1"/>
    <property type="match status" value="1"/>
</dbReference>
<dbReference type="PROSITE" id="PS01281">
    <property type="entry name" value="GIDA_2"/>
    <property type="match status" value="1"/>
</dbReference>
<reference key="1">
    <citation type="journal article" date="2007" name="PLoS Genet.">
        <title>Patterns and implications of gene gain and loss in the evolution of Prochlorococcus.</title>
        <authorList>
            <person name="Kettler G.C."/>
            <person name="Martiny A.C."/>
            <person name="Huang K."/>
            <person name="Zucker J."/>
            <person name="Coleman M.L."/>
            <person name="Rodrigue S."/>
            <person name="Chen F."/>
            <person name="Lapidus A."/>
            <person name="Ferriera S."/>
            <person name="Johnson J."/>
            <person name="Steglich C."/>
            <person name="Church G.M."/>
            <person name="Richardson P."/>
            <person name="Chisholm S.W."/>
        </authorList>
    </citation>
    <scope>NUCLEOTIDE SEQUENCE [LARGE SCALE GENOMIC DNA]</scope>
    <source>
        <strain>AS9601</strain>
    </source>
</reference>
<keyword id="KW-0963">Cytoplasm</keyword>
<keyword id="KW-0274">FAD</keyword>
<keyword id="KW-0285">Flavoprotein</keyword>
<keyword id="KW-0520">NAD</keyword>
<keyword id="KW-0819">tRNA processing</keyword>
<evidence type="ECO:0000255" key="1">
    <source>
        <dbReference type="HAMAP-Rule" id="MF_00129"/>
    </source>
</evidence>
<name>MNMG_PROMS</name>
<sequence length="655" mass="73589">MQDHNSTNESFDVIVIGGGHAGCEAAITTAKLGFSTALFTINLDRIAWQPCNPAVGGPAKSQLVHEVDALGGIIGKLADETAIQKRILNASRGPAVWALRAQTDKREYSKKMIEILQNTDNLSLKEAMITELDIAKTEQIGLNSKKILKKRIKGVKTFFGSYYSARSVIITAGTFLEGRIWIGNKSMSAGRSGEQAAQGLTQNLHEIGIKTERLKTGTPARVDKRSIIFDELDVQPSTAVDKYFSFDPDIKNNMPQVSCHITRTTTKTHQLIRDNLHLTPIYGGFIDSKGPRYCPSIEDKIVKFANKESHQIFLEPEGINTPEIYVQGFSTGLPENIQLELLRTLPGLGECKMLRPAYAVEYDYIPATQLQTSLETKEIEYLFSAGQINGTTGYEEAAAQGLVAGVNATRKLNKKDPIIFSRESSYIGTMINDLITKDLKEPYRVLTSRSEYRLTLRGDNADRRLTPLGYQIGLINEKRWSAYQEKMNLLEEEKFRLNNTRLKNTDEISKKIELETGSKIKGSTTLKELLKRPNFHYSDLIKYNLNERNLGSSIQEGVEIDIKYEGYLKRQKNNIEQINRQSCKSLPQEINYEKIETLSLEARENLNKIKPKNFGDASKIPGVSKADLTALLVWLKIREIKKEKANIFVEKKLSS</sequence>
<comment type="function">
    <text evidence="1">NAD-binding protein involved in the addition of a carboxymethylaminomethyl (cmnm) group at the wobble position (U34) of certain tRNAs, forming tRNA-cmnm(5)s(2)U34.</text>
</comment>
<comment type="cofactor">
    <cofactor evidence="1">
        <name>FAD</name>
        <dbReference type="ChEBI" id="CHEBI:57692"/>
    </cofactor>
</comment>
<comment type="subunit">
    <text evidence="1">Homodimer. Heterotetramer of two MnmE and two MnmG subunits.</text>
</comment>
<comment type="subcellular location">
    <subcellularLocation>
        <location evidence="1">Cytoplasm</location>
    </subcellularLocation>
</comment>
<comment type="similarity">
    <text evidence="1">Belongs to the MnmG family.</text>
</comment>
<accession>A2BTQ6</accession>
<protein>
    <recommendedName>
        <fullName evidence="1">tRNA uridine 5-carboxymethylaminomethyl modification enzyme MnmG</fullName>
    </recommendedName>
    <alternativeName>
        <fullName evidence="1">Glucose-inhibited division protein A</fullName>
    </alternativeName>
</protein>
<organism>
    <name type="scientific">Prochlorococcus marinus (strain AS9601)</name>
    <dbReference type="NCBI Taxonomy" id="146891"/>
    <lineage>
        <taxon>Bacteria</taxon>
        <taxon>Bacillati</taxon>
        <taxon>Cyanobacteriota</taxon>
        <taxon>Cyanophyceae</taxon>
        <taxon>Synechococcales</taxon>
        <taxon>Prochlorococcaceae</taxon>
        <taxon>Prochlorococcus</taxon>
    </lineage>
</organism>
<gene>
    <name evidence="1" type="primary">mnmG</name>
    <name evidence="1" type="synonym">gidA</name>
    <name type="ordered locus">A9601_18841</name>
</gene>